<gene>
    <name evidence="4" type="primary">TPS1</name>
</gene>
<reference key="1">
    <citation type="journal article" date="2019" name="Beilstein J. Org. Chem.">
        <title>Emission and biosynthesis of volatile terpenoids from the plasmodial slime mold Physarum polycephalum.</title>
        <authorList>
            <person name="Chen X."/>
            <person name="Koellner T.G."/>
            <person name="Xiong W."/>
            <person name="Wei G."/>
            <person name="Chen F."/>
        </authorList>
    </citation>
    <scope>NUCLEOTIDE SEQUENCE [MRNA]</scope>
    <scope>DOMAIN</scope>
    <scope>FUNCTION</scope>
    <scope>CATALYTIC ACTIVITY</scope>
</reference>
<proteinExistence type="evidence at protein level"/>
<sequence length="334" mass="38880">MNHPLRIHEIRLPWKHTPMNPHYAFVREQIVALLNELGLCEEEKEKDRRDGVITMGAYIYPDAGPNELLFGTLFVLWLFFFDDIFDESKFLKGESSQAAERTLQMFRTRQPPVNATTGLSMGIVQLEKLLLRIFKMAKDLAHGPYVISRFMETCEFYITEGAIPMDKFRFRKELPKLDEYLAVRTIDGAGEACIVCSEIVAHLALPEHIINEPRIKRMREITGQQIVYSNDIYSYHREKIHNNSVNALNIRCLTKSFNDALTDQINQVNEWVLEFEALKNSLYESTLWENNLDVYITGMENTMMGCKIWSESCTRYDLNALLHITPDKNEFPER</sequence>
<accession>P9WEY7</accession>
<name>TPS1_PHYPO</name>
<organism>
    <name type="scientific">Physarum polycephalum</name>
    <name type="common">Slime mold</name>
    <dbReference type="NCBI Taxonomy" id="5791"/>
    <lineage>
        <taxon>Eukaryota</taxon>
        <taxon>Amoebozoa</taxon>
        <taxon>Evosea</taxon>
        <taxon>Eumycetozoa</taxon>
        <taxon>Myxogastria</taxon>
        <taxon>Myxogastromycetidae</taxon>
        <taxon>Physariida</taxon>
        <taxon>Physaraceae</taxon>
        <taxon>Physarum</taxon>
    </lineage>
</organism>
<dbReference type="EC" id="4.2.3.-" evidence="3"/>
<dbReference type="EC" id="4.2.3.125" evidence="3"/>
<dbReference type="EC" id="4.2.3.126" evidence="3"/>
<dbReference type="EC" id="4.2.3.15" evidence="3"/>
<dbReference type="EC" id="4.2.3.57" evidence="3"/>
<dbReference type="EMBL" id="MN523652">
    <property type="protein sequence ID" value="QKE43661.1"/>
    <property type="molecule type" value="mRNA"/>
</dbReference>
<dbReference type="SMR" id="P9WEY7"/>
<dbReference type="GO" id="GO:0080016">
    <property type="term" value="F:(-)-E-beta-caryophyllene synthase activity"/>
    <property type="evidence" value="ECO:0007669"/>
    <property type="project" value="UniProtKB-EC"/>
</dbReference>
<dbReference type="GO" id="GO:0046872">
    <property type="term" value="F:metal ion binding"/>
    <property type="evidence" value="ECO:0007669"/>
    <property type="project" value="UniProtKB-KW"/>
</dbReference>
<dbReference type="GO" id="GO:0050551">
    <property type="term" value="F:myrcene synthase activity"/>
    <property type="evidence" value="ECO:0007669"/>
    <property type="project" value="UniProtKB-EC"/>
</dbReference>
<dbReference type="GO" id="GO:0046246">
    <property type="term" value="P:terpene biosynthetic process"/>
    <property type="evidence" value="ECO:0007669"/>
    <property type="project" value="UniProtKB-ARBA"/>
</dbReference>
<dbReference type="Gene3D" id="1.10.600.10">
    <property type="entry name" value="Farnesyl Diphosphate Synthase"/>
    <property type="match status" value="1"/>
</dbReference>
<dbReference type="InterPro" id="IPR008949">
    <property type="entry name" value="Isoprenoid_synthase_dom_sf"/>
</dbReference>
<dbReference type="InterPro" id="IPR034686">
    <property type="entry name" value="Terpene_cyclase-like_2"/>
</dbReference>
<dbReference type="PANTHER" id="PTHR35201:SF4">
    <property type="entry name" value="BETA-PINACENE SYNTHASE-RELATED"/>
    <property type="match status" value="1"/>
</dbReference>
<dbReference type="PANTHER" id="PTHR35201">
    <property type="entry name" value="TERPENE SYNTHASE"/>
    <property type="match status" value="1"/>
</dbReference>
<dbReference type="Pfam" id="PF19086">
    <property type="entry name" value="Terpene_syn_C_2"/>
    <property type="match status" value="1"/>
</dbReference>
<dbReference type="SFLD" id="SFLDS00005">
    <property type="entry name" value="Isoprenoid_Synthase_Type_I"/>
    <property type="match status" value="1"/>
</dbReference>
<dbReference type="SFLD" id="SFLDG01020">
    <property type="entry name" value="Terpene_Cyclase_Like_2"/>
    <property type="match status" value="1"/>
</dbReference>
<dbReference type="SUPFAM" id="SSF48576">
    <property type="entry name" value="Terpenoid synthases"/>
    <property type="match status" value="1"/>
</dbReference>
<feature type="chain" id="PRO_0000452097" description="Terpene synthase 1">
    <location>
        <begin position="1"/>
        <end position="334"/>
    </location>
</feature>
<feature type="short sequence motif" description="D(D/E)XX(D/E) motif" evidence="6">
    <location>
        <begin position="82"/>
        <end position="86"/>
    </location>
</feature>
<feature type="short sequence motif" description="NSE motif" evidence="6">
    <location>
        <begin position="230"/>
        <end position="238"/>
    </location>
</feature>
<feature type="short sequence motif" description="WxxxxxRY motif" evidence="6">
    <location>
        <begin position="309"/>
        <end position="316"/>
    </location>
</feature>
<feature type="binding site" evidence="1">
    <location>
        <position position="82"/>
    </location>
    <ligand>
        <name>Mg(2+)</name>
        <dbReference type="ChEBI" id="CHEBI:18420"/>
        <label>1</label>
    </ligand>
</feature>
<feature type="binding site" evidence="1">
    <location>
        <position position="86"/>
    </location>
    <ligand>
        <name>Mg(2+)</name>
        <dbReference type="ChEBI" id="CHEBI:18420"/>
        <label>1</label>
    </ligand>
</feature>
<feature type="binding site" evidence="1">
    <location>
        <position position="86"/>
    </location>
    <ligand>
        <name>Mg(2+)</name>
        <dbReference type="ChEBI" id="CHEBI:18420"/>
        <label>2</label>
    </ligand>
</feature>
<feature type="binding site" evidence="1">
    <location>
        <position position="184"/>
    </location>
    <ligand>
        <name>substrate</name>
    </ligand>
</feature>
<feature type="binding site" evidence="1">
    <location>
        <position position="230"/>
    </location>
    <ligand>
        <name>Mg(2+)</name>
        <dbReference type="ChEBI" id="CHEBI:18420"/>
        <label>3</label>
    </ligand>
</feature>
<feature type="binding site" evidence="1">
    <location>
        <position position="234"/>
    </location>
    <ligand>
        <name>Mg(2+)</name>
        <dbReference type="ChEBI" id="CHEBI:18420"/>
        <label>3</label>
    </ligand>
</feature>
<feature type="binding site" evidence="1">
    <location>
        <position position="238"/>
    </location>
    <ligand>
        <name>Mg(2+)</name>
        <dbReference type="ChEBI" id="CHEBI:18420"/>
        <label>3</label>
    </ligand>
</feature>
<evidence type="ECO:0000250" key="1">
    <source>
        <dbReference type="UniProtKB" id="B5HDJ6"/>
    </source>
</evidence>
<evidence type="ECO:0000250" key="2">
    <source>
        <dbReference type="UniProtKB" id="Q9UR08"/>
    </source>
</evidence>
<evidence type="ECO:0000269" key="3">
    <source>
    </source>
</evidence>
<evidence type="ECO:0000303" key="4">
    <source>
    </source>
</evidence>
<evidence type="ECO:0000305" key="5"/>
<evidence type="ECO:0000305" key="6">
    <source>
    </source>
</evidence>
<protein>
    <recommendedName>
        <fullName evidence="4">Terpene synthase 1</fullName>
        <shortName evidence="4">TPS1</shortName>
        <ecNumber evidence="3">4.2.3.-</ecNumber>
        <ecNumber evidence="3">4.2.3.125</ecNumber>
        <ecNumber evidence="3">4.2.3.126</ecNumber>
        <ecNumber evidence="3">4.2.3.15</ecNumber>
        <ecNumber evidence="3">4.2.3.57</ecNumber>
    </recommendedName>
    <alternativeName>
        <fullName evidence="5">Terpene cyclase TPS1</fullName>
    </alternativeName>
</protein>
<keyword id="KW-0456">Lyase</keyword>
<keyword id="KW-0460">Magnesium</keyword>
<keyword id="KW-0479">Metal-binding</keyword>
<comment type="function">
    <text evidence="3 6">Terpene synthase that catalyzes the cyclization of farnesyl diphosphate (FPP) into a mixture of sesquiterpenes with gamma-muurolene as the most abundant compound and (-)-beta-caryophyllene, alpha-muurolene, and 4 unidentified sesquiterpenes as minor compoundss (PubMed:31839833). TPS1 also shows monoterpene synthase activity and can also use geranyl diphosphate (GPP) as a substrate to convert it into a mixture of cyclic and acyclic monoterpenes, including myrcene and linalool (PubMed:31839833). P.polycephalum has a unique biology and these volatile terpenoids could function in internal communication of P.polycephalum, to mark the territory that have been explored, or they may be involved in chemotaxis (Probable).</text>
</comment>
<comment type="catalytic activity">
    <reaction evidence="3">
        <text>(2E,6E)-farnesyl diphosphate = gamma-muurolene + diphosphate</text>
        <dbReference type="Rhea" id="RHEA:33107"/>
        <dbReference type="ChEBI" id="CHEBI:33019"/>
        <dbReference type="ChEBI" id="CHEBI:64798"/>
        <dbReference type="ChEBI" id="CHEBI:175763"/>
        <dbReference type="EC" id="4.2.3.126"/>
    </reaction>
    <physiologicalReaction direction="left-to-right" evidence="3">
        <dbReference type="Rhea" id="RHEA:33108"/>
    </physiologicalReaction>
</comment>
<comment type="catalytic activity">
    <reaction evidence="3">
        <text>(2E,6E)-farnesyl diphosphate = alpha-muurolene + diphosphate</text>
        <dbReference type="Rhea" id="RHEA:33103"/>
        <dbReference type="ChEBI" id="CHEBI:33019"/>
        <dbReference type="ChEBI" id="CHEBI:64797"/>
        <dbReference type="ChEBI" id="CHEBI:175763"/>
        <dbReference type="EC" id="4.2.3.125"/>
    </reaction>
    <physiologicalReaction direction="left-to-right" evidence="3">
        <dbReference type="Rhea" id="RHEA:33104"/>
    </physiologicalReaction>
</comment>
<comment type="catalytic activity">
    <reaction evidence="3">
        <text>(2E,6E)-farnesyl diphosphate = (-)-(E)-beta-caryophyllene + diphosphate</text>
        <dbReference type="Rhea" id="RHEA:28294"/>
        <dbReference type="ChEBI" id="CHEBI:10357"/>
        <dbReference type="ChEBI" id="CHEBI:33019"/>
        <dbReference type="ChEBI" id="CHEBI:175763"/>
        <dbReference type="EC" id="4.2.3.57"/>
    </reaction>
    <physiologicalReaction direction="left-to-right" evidence="3">
        <dbReference type="Rhea" id="RHEA:28295"/>
    </physiologicalReaction>
</comment>
<comment type="catalytic activity">
    <reaction evidence="3">
        <text>(2E)-geranyl diphosphate = beta-myrcene + diphosphate</text>
        <dbReference type="Rhea" id="RHEA:16965"/>
        <dbReference type="ChEBI" id="CHEBI:17221"/>
        <dbReference type="ChEBI" id="CHEBI:33019"/>
        <dbReference type="ChEBI" id="CHEBI:58057"/>
        <dbReference type="EC" id="4.2.3.15"/>
    </reaction>
    <physiologicalReaction direction="left-to-right" evidence="3">
        <dbReference type="Rhea" id="RHEA:16966"/>
    </physiologicalReaction>
</comment>
<comment type="cofactor">
    <cofactor evidence="2">
        <name>Mg(2+)</name>
        <dbReference type="ChEBI" id="CHEBI:18420"/>
    </cofactor>
</comment>
<comment type="domain">
    <text evidence="2">The 2 conserved active-site motifs D(D/E)XX(D/E) and NSE are required for coordinating the divalent metal ions that stabilize the PPi moiety of the substrate.</text>
</comment>
<comment type="domain">
    <text evidence="6">The C-terminal WxxxxxRY motif is frequently found in terpene synthases and is important to guide product formation.</text>
</comment>
<comment type="similarity">
    <text evidence="5">Belongs to the terpene synthase family.</text>
</comment>